<sequence>MAKDTRSRKKVARRSVSEGIAHIHASFNNTIVTITDRQGNALAWATSGGQGFRGSRKSTPFAAQVAAEVAGKAAQEYGVKNIDVLVKGPGPGRESAVRALGALGYKVNSISDVTPIPHNGCRAPKKRRV</sequence>
<organism>
    <name type="scientific">Psychrobacter cryohalolentis (strain ATCC BAA-1226 / DSM 17306 / VKM B-2378 / K5)</name>
    <dbReference type="NCBI Taxonomy" id="335284"/>
    <lineage>
        <taxon>Bacteria</taxon>
        <taxon>Pseudomonadati</taxon>
        <taxon>Pseudomonadota</taxon>
        <taxon>Gammaproteobacteria</taxon>
        <taxon>Moraxellales</taxon>
        <taxon>Moraxellaceae</taxon>
        <taxon>Psychrobacter</taxon>
    </lineage>
</organism>
<dbReference type="EMBL" id="CP000323">
    <property type="protein sequence ID" value="ABE74290.1"/>
    <property type="molecule type" value="Genomic_DNA"/>
</dbReference>
<dbReference type="RefSeq" id="WP_010196728.1">
    <property type="nucleotide sequence ID" value="NC_007969.1"/>
</dbReference>
<dbReference type="SMR" id="Q1QDG3"/>
<dbReference type="STRING" id="335284.Pcryo_0507"/>
<dbReference type="KEGG" id="pcr:Pcryo_0507"/>
<dbReference type="eggNOG" id="COG0100">
    <property type="taxonomic scope" value="Bacteria"/>
</dbReference>
<dbReference type="HOGENOM" id="CLU_072439_5_0_6"/>
<dbReference type="Proteomes" id="UP000002425">
    <property type="component" value="Chromosome"/>
</dbReference>
<dbReference type="GO" id="GO:1990904">
    <property type="term" value="C:ribonucleoprotein complex"/>
    <property type="evidence" value="ECO:0007669"/>
    <property type="project" value="UniProtKB-KW"/>
</dbReference>
<dbReference type="GO" id="GO:0005840">
    <property type="term" value="C:ribosome"/>
    <property type="evidence" value="ECO:0007669"/>
    <property type="project" value="UniProtKB-KW"/>
</dbReference>
<dbReference type="GO" id="GO:0019843">
    <property type="term" value="F:rRNA binding"/>
    <property type="evidence" value="ECO:0007669"/>
    <property type="project" value="UniProtKB-UniRule"/>
</dbReference>
<dbReference type="GO" id="GO:0003735">
    <property type="term" value="F:structural constituent of ribosome"/>
    <property type="evidence" value="ECO:0007669"/>
    <property type="project" value="InterPro"/>
</dbReference>
<dbReference type="GO" id="GO:0006412">
    <property type="term" value="P:translation"/>
    <property type="evidence" value="ECO:0007669"/>
    <property type="project" value="UniProtKB-UniRule"/>
</dbReference>
<dbReference type="FunFam" id="3.30.420.80:FF:000001">
    <property type="entry name" value="30S ribosomal protein S11"/>
    <property type="match status" value="1"/>
</dbReference>
<dbReference type="Gene3D" id="3.30.420.80">
    <property type="entry name" value="Ribosomal protein S11"/>
    <property type="match status" value="1"/>
</dbReference>
<dbReference type="HAMAP" id="MF_01310">
    <property type="entry name" value="Ribosomal_uS11"/>
    <property type="match status" value="1"/>
</dbReference>
<dbReference type="InterPro" id="IPR001971">
    <property type="entry name" value="Ribosomal_uS11"/>
</dbReference>
<dbReference type="InterPro" id="IPR019981">
    <property type="entry name" value="Ribosomal_uS11_bac-type"/>
</dbReference>
<dbReference type="InterPro" id="IPR018102">
    <property type="entry name" value="Ribosomal_uS11_CS"/>
</dbReference>
<dbReference type="InterPro" id="IPR036967">
    <property type="entry name" value="Ribosomal_uS11_sf"/>
</dbReference>
<dbReference type="NCBIfam" id="NF003698">
    <property type="entry name" value="PRK05309.1"/>
    <property type="match status" value="1"/>
</dbReference>
<dbReference type="NCBIfam" id="TIGR03632">
    <property type="entry name" value="uS11_bact"/>
    <property type="match status" value="1"/>
</dbReference>
<dbReference type="PANTHER" id="PTHR11759">
    <property type="entry name" value="40S RIBOSOMAL PROTEIN S14/30S RIBOSOMAL PROTEIN S11"/>
    <property type="match status" value="1"/>
</dbReference>
<dbReference type="Pfam" id="PF00411">
    <property type="entry name" value="Ribosomal_S11"/>
    <property type="match status" value="1"/>
</dbReference>
<dbReference type="PIRSF" id="PIRSF002131">
    <property type="entry name" value="Ribosomal_S11"/>
    <property type="match status" value="1"/>
</dbReference>
<dbReference type="SUPFAM" id="SSF53137">
    <property type="entry name" value="Translational machinery components"/>
    <property type="match status" value="1"/>
</dbReference>
<dbReference type="PROSITE" id="PS00054">
    <property type="entry name" value="RIBOSOMAL_S11"/>
    <property type="match status" value="1"/>
</dbReference>
<comment type="function">
    <text evidence="1">Located on the platform of the 30S subunit, it bridges several disparate RNA helices of the 16S rRNA. Forms part of the Shine-Dalgarno cleft in the 70S ribosome.</text>
</comment>
<comment type="subunit">
    <text evidence="1">Part of the 30S ribosomal subunit. Interacts with proteins S7 and S18. Binds to IF-3.</text>
</comment>
<comment type="similarity">
    <text evidence="1">Belongs to the universal ribosomal protein uS11 family.</text>
</comment>
<protein>
    <recommendedName>
        <fullName evidence="1">Small ribosomal subunit protein uS11</fullName>
    </recommendedName>
    <alternativeName>
        <fullName evidence="2">30S ribosomal protein S11</fullName>
    </alternativeName>
</protein>
<reference key="1">
    <citation type="submission" date="2006-03" db="EMBL/GenBank/DDBJ databases">
        <title>Complete sequence of chromosome of Psychrobacter cryohalolentis K5.</title>
        <authorList>
            <consortium name="US DOE Joint Genome Institute"/>
            <person name="Copeland A."/>
            <person name="Lucas S."/>
            <person name="Lapidus A."/>
            <person name="Barry K."/>
            <person name="Detter J.C."/>
            <person name="Glavina T."/>
            <person name="Hammon N."/>
            <person name="Israni S."/>
            <person name="Dalin E."/>
            <person name="Tice H."/>
            <person name="Pitluck S."/>
            <person name="Brettin T."/>
            <person name="Bruce D."/>
            <person name="Han C."/>
            <person name="Tapia R."/>
            <person name="Sims D.R."/>
            <person name="Gilna P."/>
            <person name="Schmutz J."/>
            <person name="Larimer F."/>
            <person name="Land M."/>
            <person name="Hauser L."/>
            <person name="Kyrpides N."/>
            <person name="Kim E."/>
            <person name="Richardson P."/>
        </authorList>
    </citation>
    <scope>NUCLEOTIDE SEQUENCE [LARGE SCALE GENOMIC DNA]</scope>
    <source>
        <strain>ATCC BAA-1226 / DSM 17306 / VKM B-2378 / K5</strain>
    </source>
</reference>
<gene>
    <name evidence="1" type="primary">rpsK</name>
    <name type="ordered locus">Pcryo_0507</name>
</gene>
<accession>Q1QDG3</accession>
<keyword id="KW-0687">Ribonucleoprotein</keyword>
<keyword id="KW-0689">Ribosomal protein</keyword>
<keyword id="KW-0694">RNA-binding</keyword>
<keyword id="KW-0699">rRNA-binding</keyword>
<evidence type="ECO:0000255" key="1">
    <source>
        <dbReference type="HAMAP-Rule" id="MF_01310"/>
    </source>
</evidence>
<evidence type="ECO:0000305" key="2"/>
<feature type="chain" id="PRO_0000294829" description="Small ribosomal subunit protein uS11">
    <location>
        <begin position="1"/>
        <end position="129"/>
    </location>
</feature>
<name>RS11_PSYCK</name>
<proteinExistence type="inferred from homology"/>